<evidence type="ECO:0000250" key="1"/>
<evidence type="ECO:0000255" key="2">
    <source>
        <dbReference type="PROSITE-ProRule" id="PRU00319"/>
    </source>
</evidence>
<feature type="chain" id="PRO_0000111726" description="Glutamate uptake regulatory protein">
    <location>
        <begin position="1"/>
        <end position="164"/>
    </location>
</feature>
<feature type="domain" description="HTH asnC-type" evidence="2">
    <location>
        <begin position="5"/>
        <end position="66"/>
    </location>
</feature>
<feature type="DNA-binding region" description="H-T-H motif" evidence="2">
    <location>
        <begin position="24"/>
        <end position="43"/>
    </location>
</feature>
<comment type="function">
    <text evidence="1">Represses the secondary, H(+)-coupled glutamate uptake system (Gluemp) genes.</text>
</comment>
<organism>
    <name type="scientific">Zymomonas mobilis subsp. mobilis (strain ATCC 31821 / ZM4 / CP4)</name>
    <dbReference type="NCBI Taxonomy" id="264203"/>
    <lineage>
        <taxon>Bacteria</taxon>
        <taxon>Pseudomonadati</taxon>
        <taxon>Pseudomonadota</taxon>
        <taxon>Alphaproteobacteria</taxon>
        <taxon>Sphingomonadales</taxon>
        <taxon>Zymomonadaceae</taxon>
        <taxon>Zymomonas</taxon>
    </lineage>
</organism>
<accession>P0DJA5</accession>
<accession>P74996</accession>
<accession>Q5NQC4</accession>
<protein>
    <recommendedName>
        <fullName>Glutamate uptake regulatory protein</fullName>
    </recommendedName>
</protein>
<name>GRP_ZYMMO</name>
<keyword id="KW-0238">DNA-binding</keyword>
<keyword id="KW-1185">Reference proteome</keyword>
<keyword id="KW-0678">Repressor</keyword>
<keyword id="KW-0804">Transcription</keyword>
<keyword id="KW-0805">Transcription regulation</keyword>
<reference key="1">
    <citation type="journal article" date="2005" name="Nat. Biotechnol.">
        <title>The genome sequence of the ethanologenic bacterium Zymomonas mobilis ZM4.</title>
        <authorList>
            <person name="Seo J.-S."/>
            <person name="Chong H."/>
            <person name="Park H.S."/>
            <person name="Yoon K.-O."/>
            <person name="Jung C."/>
            <person name="Kim J.J."/>
            <person name="Hong J.H."/>
            <person name="Kim H."/>
            <person name="Kim J.-H."/>
            <person name="Kil J.-I."/>
            <person name="Park C.J."/>
            <person name="Oh H.-M."/>
            <person name="Lee J.-S."/>
            <person name="Jin S.-J."/>
            <person name="Um H.-W."/>
            <person name="Lee H.-J."/>
            <person name="Oh S.-J."/>
            <person name="Kim J.Y."/>
            <person name="Kang H.L."/>
            <person name="Lee S.Y."/>
            <person name="Lee K.J."/>
            <person name="Kang H.S."/>
        </authorList>
    </citation>
    <scope>NUCLEOTIDE SEQUENCE [LARGE SCALE GENOMIC DNA]</scope>
    <source>
        <strain>ATCC 31821 / ZM4 / CP4</strain>
    </source>
</reference>
<dbReference type="EMBL" id="AE008692">
    <property type="protein sequence ID" value="AAV89081.1"/>
    <property type="molecule type" value="Genomic_DNA"/>
</dbReference>
<dbReference type="SMR" id="P0DJA5"/>
<dbReference type="STRING" id="264203.ZMO0457"/>
<dbReference type="KEGG" id="zmo:ZMO0457"/>
<dbReference type="eggNOG" id="COG1522">
    <property type="taxonomic scope" value="Bacteria"/>
</dbReference>
<dbReference type="HOGENOM" id="CLU_091233_0_2_5"/>
<dbReference type="Proteomes" id="UP000001173">
    <property type="component" value="Chromosome"/>
</dbReference>
<dbReference type="GO" id="GO:0005829">
    <property type="term" value="C:cytosol"/>
    <property type="evidence" value="ECO:0007669"/>
    <property type="project" value="TreeGrafter"/>
</dbReference>
<dbReference type="GO" id="GO:0043565">
    <property type="term" value="F:sequence-specific DNA binding"/>
    <property type="evidence" value="ECO:0007669"/>
    <property type="project" value="InterPro"/>
</dbReference>
<dbReference type="GO" id="GO:0043200">
    <property type="term" value="P:response to amino acid"/>
    <property type="evidence" value="ECO:0007669"/>
    <property type="project" value="TreeGrafter"/>
</dbReference>
<dbReference type="CDD" id="cd00090">
    <property type="entry name" value="HTH_ARSR"/>
    <property type="match status" value="1"/>
</dbReference>
<dbReference type="Gene3D" id="3.30.70.920">
    <property type="match status" value="1"/>
</dbReference>
<dbReference type="Gene3D" id="1.10.10.10">
    <property type="entry name" value="Winged helix-like DNA-binding domain superfamily/Winged helix DNA-binding domain"/>
    <property type="match status" value="1"/>
</dbReference>
<dbReference type="InterPro" id="IPR011991">
    <property type="entry name" value="ArsR-like_HTH"/>
</dbReference>
<dbReference type="InterPro" id="IPR000485">
    <property type="entry name" value="AsnC-type_HTH_dom"/>
</dbReference>
<dbReference type="InterPro" id="IPR011008">
    <property type="entry name" value="Dimeric_a/b-barrel"/>
</dbReference>
<dbReference type="InterPro" id="IPR019888">
    <property type="entry name" value="Tscrpt_reg_AsnC-like"/>
</dbReference>
<dbReference type="InterPro" id="IPR019887">
    <property type="entry name" value="Tscrpt_reg_AsnC/Lrp_C"/>
</dbReference>
<dbReference type="InterPro" id="IPR019885">
    <property type="entry name" value="Tscrpt_reg_HTH_AsnC-type_CS"/>
</dbReference>
<dbReference type="InterPro" id="IPR036388">
    <property type="entry name" value="WH-like_DNA-bd_sf"/>
</dbReference>
<dbReference type="InterPro" id="IPR036390">
    <property type="entry name" value="WH_DNA-bd_sf"/>
</dbReference>
<dbReference type="PANTHER" id="PTHR30154:SF17">
    <property type="entry name" value="DNA-BINDING TRANSCRIPTIONAL ACTIVATOR DECR"/>
    <property type="match status" value="1"/>
</dbReference>
<dbReference type="PANTHER" id="PTHR30154">
    <property type="entry name" value="LEUCINE-RESPONSIVE REGULATORY PROTEIN"/>
    <property type="match status" value="1"/>
</dbReference>
<dbReference type="Pfam" id="PF01037">
    <property type="entry name" value="AsnC_trans_reg"/>
    <property type="match status" value="1"/>
</dbReference>
<dbReference type="Pfam" id="PF13412">
    <property type="entry name" value="HTH_24"/>
    <property type="match status" value="1"/>
</dbReference>
<dbReference type="PRINTS" id="PR00033">
    <property type="entry name" value="HTHASNC"/>
</dbReference>
<dbReference type="SMART" id="SM00344">
    <property type="entry name" value="HTH_ASNC"/>
    <property type="match status" value="1"/>
</dbReference>
<dbReference type="SUPFAM" id="SSF54909">
    <property type="entry name" value="Dimeric alpha+beta barrel"/>
    <property type="match status" value="1"/>
</dbReference>
<dbReference type="SUPFAM" id="SSF46785">
    <property type="entry name" value="Winged helix' DNA-binding domain"/>
    <property type="match status" value="1"/>
</dbReference>
<dbReference type="PROSITE" id="PS00519">
    <property type="entry name" value="HTH_ASNC_1"/>
    <property type="match status" value="1"/>
</dbReference>
<dbReference type="PROSITE" id="PS50956">
    <property type="entry name" value="HTH_ASNC_2"/>
    <property type="match status" value="1"/>
</dbReference>
<gene>
    <name type="primary">grp</name>
    <name type="ordered locus">ZMO0457</name>
</gene>
<proteinExistence type="inferred from homology"/>
<sequence length="164" mass="18723">MIRKLDDFDIKILDLLQHDATATMAELSEKTGLSANACWRRIRLLEADGVIKNRVTLLDPQKIGLGITVFVCIRCAEHSQDWLDNFLQIVNESPEVIEFYRLAGDIDYLLKLQVASISEYDRLYKKLVSRVKLTDVSAIFSMEELKHSTILPLPETSDKAERKA</sequence>